<gene>
    <name evidence="1" type="primary">truD</name>
    <name type="ordered locus">STY3053</name>
    <name type="ordered locus">t2829</name>
</gene>
<comment type="function">
    <text evidence="1">Responsible for synthesis of pseudouridine from uracil-13 in transfer RNAs.</text>
</comment>
<comment type="catalytic activity">
    <reaction evidence="1">
        <text>uridine(13) in tRNA = pseudouridine(13) in tRNA</text>
        <dbReference type="Rhea" id="RHEA:42540"/>
        <dbReference type="Rhea" id="RHEA-COMP:10105"/>
        <dbReference type="Rhea" id="RHEA-COMP:10106"/>
        <dbReference type="ChEBI" id="CHEBI:65314"/>
        <dbReference type="ChEBI" id="CHEBI:65315"/>
        <dbReference type="EC" id="5.4.99.27"/>
    </reaction>
</comment>
<comment type="similarity">
    <text evidence="1">Belongs to the pseudouridine synthase TruD family.</text>
</comment>
<sequence length="349" mass="39361">MTEFDNLTWLHGKPQGSGLLKANPEDFVVVEDLGFTPDGEGEHILLRILKNGCNTRFVADVLAKFLKIHAREVSFAGQKDKHAVTEQWLCARVPGKEMPDFSAFQLEGCKVLEYARHKRKLRLGALKGNAFTLVLREISDRRDVETRLQAIRDGGVPNYFGAQRFGIGGSNLQGALRWAQSNAPVRDRNKRSFWLSAARSALFNQIVHQRLKKPDFNQVVDGDALQLAGRGSWFVATSEELPELQRRVDEKELMITASLPGSGEWGTQRAALAFEQDAIAQETVLQSLLLREKVEASRRAMLLYPQQLSWNWWDDVTVELRFWLPAGSFATSVVRELINTMGDYAHIAE</sequence>
<proteinExistence type="inferred from homology"/>
<organism>
    <name type="scientific">Salmonella typhi</name>
    <dbReference type="NCBI Taxonomy" id="90370"/>
    <lineage>
        <taxon>Bacteria</taxon>
        <taxon>Pseudomonadati</taxon>
        <taxon>Pseudomonadota</taxon>
        <taxon>Gammaproteobacteria</taxon>
        <taxon>Enterobacterales</taxon>
        <taxon>Enterobacteriaceae</taxon>
        <taxon>Salmonella</taxon>
    </lineage>
</organism>
<feature type="chain" id="PRO_0000152519" description="tRNA pseudouridine synthase D">
    <location>
        <begin position="1"/>
        <end position="349"/>
    </location>
</feature>
<feature type="domain" description="TRUD" evidence="1">
    <location>
        <begin position="155"/>
        <end position="303"/>
    </location>
</feature>
<feature type="active site" description="Nucleophile" evidence="1">
    <location>
        <position position="80"/>
    </location>
</feature>
<feature type="binding site" evidence="1">
    <location>
        <position position="27"/>
    </location>
    <ligand>
        <name>substrate</name>
    </ligand>
</feature>
<feature type="binding site" evidence="1">
    <location>
        <position position="129"/>
    </location>
    <ligand>
        <name>substrate</name>
    </ligand>
</feature>
<feature type="binding site" evidence="1">
    <location>
        <position position="329"/>
    </location>
    <ligand>
        <name>substrate</name>
    </ligand>
</feature>
<dbReference type="EC" id="5.4.99.27" evidence="1"/>
<dbReference type="EMBL" id="AL513382">
    <property type="protein sequence ID" value="CAD06034.1"/>
    <property type="molecule type" value="Genomic_DNA"/>
</dbReference>
<dbReference type="EMBL" id="AE014613">
    <property type="protein sequence ID" value="AAO70386.1"/>
    <property type="molecule type" value="Genomic_DNA"/>
</dbReference>
<dbReference type="RefSeq" id="NP_457317.1">
    <property type="nucleotide sequence ID" value="NC_003198.1"/>
</dbReference>
<dbReference type="RefSeq" id="WP_000134253.1">
    <property type="nucleotide sequence ID" value="NZ_WSUR01000005.1"/>
</dbReference>
<dbReference type="SMR" id="Q8Z473"/>
<dbReference type="STRING" id="220341.gene:17586944"/>
<dbReference type="KEGG" id="stt:t2829"/>
<dbReference type="KEGG" id="sty:STY3053"/>
<dbReference type="PATRIC" id="fig|220341.7.peg.3106"/>
<dbReference type="eggNOG" id="COG0585">
    <property type="taxonomic scope" value="Bacteria"/>
</dbReference>
<dbReference type="HOGENOM" id="CLU_005281_4_0_6"/>
<dbReference type="OMA" id="LWLWVEK"/>
<dbReference type="OrthoDB" id="1550679at2"/>
<dbReference type="Proteomes" id="UP000000541">
    <property type="component" value="Chromosome"/>
</dbReference>
<dbReference type="Proteomes" id="UP000002670">
    <property type="component" value="Chromosome"/>
</dbReference>
<dbReference type="GO" id="GO:0005829">
    <property type="term" value="C:cytosol"/>
    <property type="evidence" value="ECO:0007669"/>
    <property type="project" value="TreeGrafter"/>
</dbReference>
<dbReference type="GO" id="GO:0003723">
    <property type="term" value="F:RNA binding"/>
    <property type="evidence" value="ECO:0007669"/>
    <property type="project" value="InterPro"/>
</dbReference>
<dbReference type="GO" id="GO:0160150">
    <property type="term" value="F:tRNA pseudouridine(13) synthase activity"/>
    <property type="evidence" value="ECO:0007669"/>
    <property type="project" value="UniProtKB-EC"/>
</dbReference>
<dbReference type="GO" id="GO:0031119">
    <property type="term" value="P:tRNA pseudouridine synthesis"/>
    <property type="evidence" value="ECO:0007669"/>
    <property type="project" value="UniProtKB-UniRule"/>
</dbReference>
<dbReference type="CDD" id="cd02575">
    <property type="entry name" value="PseudoU_synth_EcTruD"/>
    <property type="match status" value="1"/>
</dbReference>
<dbReference type="FunFam" id="3.30.2340.10:FF:000001">
    <property type="entry name" value="tRNA pseudouridine synthase D"/>
    <property type="match status" value="1"/>
</dbReference>
<dbReference type="FunFam" id="3.30.2350.20:FF:000001">
    <property type="entry name" value="tRNA pseudouridine synthase D"/>
    <property type="match status" value="1"/>
</dbReference>
<dbReference type="Gene3D" id="3.30.2350.20">
    <property type="entry name" value="TruD, catalytic domain"/>
    <property type="match status" value="1"/>
</dbReference>
<dbReference type="Gene3D" id="3.30.2340.10">
    <property type="entry name" value="TruD, insertion domain"/>
    <property type="match status" value="1"/>
</dbReference>
<dbReference type="HAMAP" id="MF_01082">
    <property type="entry name" value="TruD"/>
    <property type="match status" value="1"/>
</dbReference>
<dbReference type="InterPro" id="IPR020103">
    <property type="entry name" value="PsdUridine_synth_cat_dom_sf"/>
</dbReference>
<dbReference type="InterPro" id="IPR001656">
    <property type="entry name" value="PsdUridine_synth_TruD"/>
</dbReference>
<dbReference type="InterPro" id="IPR020119">
    <property type="entry name" value="PsdUridine_synth_TruD_CS"/>
</dbReference>
<dbReference type="InterPro" id="IPR011760">
    <property type="entry name" value="PsdUridine_synth_TruD_insert"/>
</dbReference>
<dbReference type="InterPro" id="IPR042214">
    <property type="entry name" value="TruD_catalytic"/>
</dbReference>
<dbReference type="InterPro" id="IPR043165">
    <property type="entry name" value="TruD_insert_sf"/>
</dbReference>
<dbReference type="InterPro" id="IPR050170">
    <property type="entry name" value="TruD_pseudoU_synthase"/>
</dbReference>
<dbReference type="NCBIfam" id="NF002155">
    <property type="entry name" value="PRK00984.1-4"/>
    <property type="match status" value="1"/>
</dbReference>
<dbReference type="NCBIfam" id="TIGR00094">
    <property type="entry name" value="tRNA_TruD_broad"/>
    <property type="match status" value="1"/>
</dbReference>
<dbReference type="PANTHER" id="PTHR47811">
    <property type="entry name" value="TRNA PSEUDOURIDINE SYNTHASE D"/>
    <property type="match status" value="1"/>
</dbReference>
<dbReference type="PANTHER" id="PTHR47811:SF1">
    <property type="entry name" value="TRNA PSEUDOURIDINE SYNTHASE D"/>
    <property type="match status" value="1"/>
</dbReference>
<dbReference type="Pfam" id="PF01142">
    <property type="entry name" value="TruD"/>
    <property type="match status" value="2"/>
</dbReference>
<dbReference type="SUPFAM" id="SSF55120">
    <property type="entry name" value="Pseudouridine synthase"/>
    <property type="match status" value="1"/>
</dbReference>
<dbReference type="PROSITE" id="PS50984">
    <property type="entry name" value="TRUD"/>
    <property type="match status" value="1"/>
</dbReference>
<dbReference type="PROSITE" id="PS01268">
    <property type="entry name" value="UPF0024"/>
    <property type="match status" value="1"/>
</dbReference>
<protein>
    <recommendedName>
        <fullName evidence="1">tRNA pseudouridine synthase D</fullName>
        <ecNumber evidence="1">5.4.99.27</ecNumber>
    </recommendedName>
    <alternativeName>
        <fullName evidence="1">tRNA pseudouridine(13) synthase</fullName>
    </alternativeName>
    <alternativeName>
        <fullName evidence="1">tRNA pseudouridylate synthase D</fullName>
    </alternativeName>
    <alternativeName>
        <fullName evidence="1">tRNA-uridine isomerase D</fullName>
    </alternativeName>
</protein>
<reference key="1">
    <citation type="journal article" date="2001" name="Nature">
        <title>Complete genome sequence of a multiple drug resistant Salmonella enterica serovar Typhi CT18.</title>
        <authorList>
            <person name="Parkhill J."/>
            <person name="Dougan G."/>
            <person name="James K.D."/>
            <person name="Thomson N.R."/>
            <person name="Pickard D."/>
            <person name="Wain J."/>
            <person name="Churcher C.M."/>
            <person name="Mungall K.L."/>
            <person name="Bentley S.D."/>
            <person name="Holden M.T.G."/>
            <person name="Sebaihia M."/>
            <person name="Baker S."/>
            <person name="Basham D."/>
            <person name="Brooks K."/>
            <person name="Chillingworth T."/>
            <person name="Connerton P."/>
            <person name="Cronin A."/>
            <person name="Davis P."/>
            <person name="Davies R.M."/>
            <person name="Dowd L."/>
            <person name="White N."/>
            <person name="Farrar J."/>
            <person name="Feltwell T."/>
            <person name="Hamlin N."/>
            <person name="Haque A."/>
            <person name="Hien T.T."/>
            <person name="Holroyd S."/>
            <person name="Jagels K."/>
            <person name="Krogh A."/>
            <person name="Larsen T.S."/>
            <person name="Leather S."/>
            <person name="Moule S."/>
            <person name="O'Gaora P."/>
            <person name="Parry C."/>
            <person name="Quail M.A."/>
            <person name="Rutherford K.M."/>
            <person name="Simmonds M."/>
            <person name="Skelton J."/>
            <person name="Stevens K."/>
            <person name="Whitehead S."/>
            <person name="Barrell B.G."/>
        </authorList>
    </citation>
    <scope>NUCLEOTIDE SEQUENCE [LARGE SCALE GENOMIC DNA]</scope>
    <source>
        <strain>CT18</strain>
    </source>
</reference>
<reference key="2">
    <citation type="journal article" date="2003" name="J. Bacteriol.">
        <title>Comparative genomics of Salmonella enterica serovar Typhi strains Ty2 and CT18.</title>
        <authorList>
            <person name="Deng W."/>
            <person name="Liou S.-R."/>
            <person name="Plunkett G. III"/>
            <person name="Mayhew G.F."/>
            <person name="Rose D.J."/>
            <person name="Burland V."/>
            <person name="Kodoyianni V."/>
            <person name="Schwartz D.C."/>
            <person name="Blattner F.R."/>
        </authorList>
    </citation>
    <scope>NUCLEOTIDE SEQUENCE [LARGE SCALE GENOMIC DNA]</scope>
    <source>
        <strain>ATCC 700931 / Ty2</strain>
    </source>
</reference>
<evidence type="ECO:0000255" key="1">
    <source>
        <dbReference type="HAMAP-Rule" id="MF_01082"/>
    </source>
</evidence>
<keyword id="KW-0413">Isomerase</keyword>
<keyword id="KW-0819">tRNA processing</keyword>
<accession>Q8Z473</accession>
<name>TRUD_SALTI</name>